<comment type="function">
    <text evidence="1">Catalyzes oxygen-dependent 5-hydroxyuridine (ho5U) modification at position 34 in tRNAs.</text>
</comment>
<comment type="catalytic activity">
    <reaction evidence="1">
        <text>uridine(34) in tRNA + AH2 + O2 = 5-hydroxyuridine(34) in tRNA + A + H2O</text>
        <dbReference type="Rhea" id="RHEA:64224"/>
        <dbReference type="Rhea" id="RHEA-COMP:11727"/>
        <dbReference type="Rhea" id="RHEA-COMP:13381"/>
        <dbReference type="ChEBI" id="CHEBI:13193"/>
        <dbReference type="ChEBI" id="CHEBI:15377"/>
        <dbReference type="ChEBI" id="CHEBI:15379"/>
        <dbReference type="ChEBI" id="CHEBI:17499"/>
        <dbReference type="ChEBI" id="CHEBI:65315"/>
        <dbReference type="ChEBI" id="CHEBI:136877"/>
    </reaction>
</comment>
<comment type="similarity">
    <text evidence="1">Belongs to the TrhO family.</text>
</comment>
<proteinExistence type="inferred from homology"/>
<organism>
    <name type="scientific">Streptococcus pneumoniae serotype 19F (strain G54)</name>
    <dbReference type="NCBI Taxonomy" id="512566"/>
    <lineage>
        <taxon>Bacteria</taxon>
        <taxon>Bacillati</taxon>
        <taxon>Bacillota</taxon>
        <taxon>Bacilli</taxon>
        <taxon>Lactobacillales</taxon>
        <taxon>Streptococcaceae</taxon>
        <taxon>Streptococcus</taxon>
    </lineage>
</organism>
<protein>
    <recommendedName>
        <fullName evidence="1">tRNA uridine(34) hydroxylase</fullName>
        <ecNumber evidence="1">1.14.-.-</ecNumber>
    </recommendedName>
    <alternativeName>
        <fullName evidence="1">tRNA hydroxylation protein O</fullName>
    </alternativeName>
</protein>
<dbReference type="EC" id="1.14.-.-" evidence="1"/>
<dbReference type="EMBL" id="CP001015">
    <property type="protein sequence ID" value="ACF56832.1"/>
    <property type="molecule type" value="Genomic_DNA"/>
</dbReference>
<dbReference type="KEGG" id="spx:SPG_0092"/>
<dbReference type="HOGENOM" id="CLU_038878_1_0_9"/>
<dbReference type="GO" id="GO:0016705">
    <property type="term" value="F:oxidoreductase activity, acting on paired donors, with incorporation or reduction of molecular oxygen"/>
    <property type="evidence" value="ECO:0007669"/>
    <property type="project" value="UniProtKB-UniRule"/>
</dbReference>
<dbReference type="GO" id="GO:0006400">
    <property type="term" value="P:tRNA modification"/>
    <property type="evidence" value="ECO:0007669"/>
    <property type="project" value="UniProtKB-UniRule"/>
</dbReference>
<dbReference type="CDD" id="cd01518">
    <property type="entry name" value="RHOD_YceA"/>
    <property type="match status" value="1"/>
</dbReference>
<dbReference type="Gene3D" id="3.30.70.100">
    <property type="match status" value="1"/>
</dbReference>
<dbReference type="Gene3D" id="3.40.250.10">
    <property type="entry name" value="Rhodanese-like domain"/>
    <property type="match status" value="1"/>
</dbReference>
<dbReference type="HAMAP" id="MF_00469">
    <property type="entry name" value="TrhO"/>
    <property type="match status" value="1"/>
</dbReference>
<dbReference type="InterPro" id="IPR001763">
    <property type="entry name" value="Rhodanese-like_dom"/>
</dbReference>
<dbReference type="InterPro" id="IPR036873">
    <property type="entry name" value="Rhodanese-like_dom_sf"/>
</dbReference>
<dbReference type="InterPro" id="IPR022111">
    <property type="entry name" value="Rhodanese_C"/>
</dbReference>
<dbReference type="InterPro" id="IPR020936">
    <property type="entry name" value="TrhO"/>
</dbReference>
<dbReference type="InterPro" id="IPR040503">
    <property type="entry name" value="TRHO_N"/>
</dbReference>
<dbReference type="NCBIfam" id="NF001135">
    <property type="entry name" value="PRK00142.1-3"/>
    <property type="match status" value="1"/>
</dbReference>
<dbReference type="NCBIfam" id="NF001137">
    <property type="entry name" value="PRK00142.1-5"/>
    <property type="match status" value="1"/>
</dbReference>
<dbReference type="PANTHER" id="PTHR43268:SF3">
    <property type="entry name" value="RHODANESE-LIKE DOMAIN-CONTAINING PROTEIN 7-RELATED"/>
    <property type="match status" value="1"/>
</dbReference>
<dbReference type="PANTHER" id="PTHR43268">
    <property type="entry name" value="THIOSULFATE SULFURTRANSFERASE/RHODANESE-LIKE DOMAIN-CONTAINING PROTEIN 2"/>
    <property type="match status" value="1"/>
</dbReference>
<dbReference type="Pfam" id="PF00581">
    <property type="entry name" value="Rhodanese"/>
    <property type="match status" value="1"/>
</dbReference>
<dbReference type="Pfam" id="PF12368">
    <property type="entry name" value="Rhodanese_C"/>
    <property type="match status" value="1"/>
</dbReference>
<dbReference type="Pfam" id="PF17773">
    <property type="entry name" value="UPF0176_N"/>
    <property type="match status" value="1"/>
</dbReference>
<dbReference type="SMART" id="SM00450">
    <property type="entry name" value="RHOD"/>
    <property type="match status" value="1"/>
</dbReference>
<dbReference type="SUPFAM" id="SSF52821">
    <property type="entry name" value="Rhodanese/Cell cycle control phosphatase"/>
    <property type="match status" value="1"/>
</dbReference>
<dbReference type="PROSITE" id="PS50206">
    <property type="entry name" value="RHODANESE_3"/>
    <property type="match status" value="1"/>
</dbReference>
<feature type="chain" id="PRO_1000200383" description="tRNA uridine(34) hydroxylase">
    <location>
        <begin position="1"/>
        <end position="328"/>
    </location>
</feature>
<feature type="domain" description="Rhodanese" evidence="1">
    <location>
        <begin position="130"/>
        <end position="224"/>
    </location>
</feature>
<feature type="active site" description="Cysteine persulfide intermediate" evidence="1">
    <location>
        <position position="184"/>
    </location>
</feature>
<reference key="1">
    <citation type="journal article" date="2001" name="Microb. Drug Resist.">
        <title>Annotated draft genomic sequence from a Streptococcus pneumoniae type 19F clinical isolate.</title>
        <authorList>
            <person name="Dopazo J."/>
            <person name="Mendoza A."/>
            <person name="Herrero J."/>
            <person name="Caldara F."/>
            <person name="Humbert Y."/>
            <person name="Friedli L."/>
            <person name="Guerrier M."/>
            <person name="Grand-Schenk E."/>
            <person name="Gandin C."/>
            <person name="de Francesco M."/>
            <person name="Polissi A."/>
            <person name="Buell G."/>
            <person name="Feger G."/>
            <person name="Garcia E."/>
            <person name="Peitsch M."/>
            <person name="Garcia-Bustos J.F."/>
        </authorList>
    </citation>
    <scope>NUCLEOTIDE SEQUENCE [LARGE SCALE GENOMIC DNA]</scope>
    <source>
        <strain>G54</strain>
    </source>
</reference>
<reference key="2">
    <citation type="submission" date="2008-03" db="EMBL/GenBank/DDBJ databases">
        <title>Pneumococcal beta glucoside metabolism investigated by whole genome comparison.</title>
        <authorList>
            <person name="Mulas L."/>
            <person name="Trappetti C."/>
            <person name="Hakenbeck R."/>
            <person name="Iannelli F."/>
            <person name="Pozzi G."/>
            <person name="Davidsen T.M."/>
            <person name="Tettelin H."/>
            <person name="Oggioni M."/>
        </authorList>
    </citation>
    <scope>NUCLEOTIDE SEQUENCE [LARGE SCALE GENOMIC DNA]</scope>
    <source>
        <strain>G54</strain>
    </source>
</reference>
<name>TRHO_STRP4</name>
<sequence>MAKDIRVLLYYLYTPIENAEQFAADHLAFCKSIGLKGRILVADEGINGTVSGDYETTQKYMDYVHSLPGMEELWFKIDEESEQAFKKMFVRYKKEIVHLGLEDNDFDNDINPLETTGAYLSPKEFKEALLDKDTVVLDTRNDYEYDLGHFRGAIRPDIRNFREXPQWVRDNKEKFMDKRVVVYCTGGVRCEKFSGWMVREGYKDVGQLHGGIATYGKDPEVQGELWDGKMYVFDERIAVDVNHVNPTIVGKDWFDGTPCERYVNCGNPFCNRRILTSEENEDKYLRGCSHECRVHPRNRYVSKNELTQAEVIERLAAIGESLDQAATV</sequence>
<accession>B5E5X4</accession>
<gene>
    <name evidence="1" type="primary">trhO</name>
    <name type="ordered locus">SPG_0092</name>
</gene>
<keyword id="KW-0560">Oxidoreductase</keyword>
<keyword id="KW-0819">tRNA processing</keyword>
<evidence type="ECO:0000255" key="1">
    <source>
        <dbReference type="HAMAP-Rule" id="MF_00469"/>
    </source>
</evidence>